<evidence type="ECO:0000250" key="1"/>
<evidence type="ECO:0000255" key="2"/>
<evidence type="ECO:0000255" key="3">
    <source>
        <dbReference type="PROSITE-ProRule" id="PRU10088"/>
    </source>
</evidence>
<evidence type="ECO:0000255" key="4">
    <source>
        <dbReference type="PROSITE-ProRule" id="PRU10089"/>
    </source>
</evidence>
<evidence type="ECO:0000255" key="5">
    <source>
        <dbReference type="PROSITE-ProRule" id="PRU10090"/>
    </source>
</evidence>
<proteinExistence type="evidence at transcript level"/>
<sequence length="376" mass="41851">MRLLVFLILLIFVNFSFANVRPNGRRFSESQYRTAFTEWTLKFNRQYSSSEFSNRYSIFKSNMDYVDNWNSKGDSQTVLGLNNFADITNEEYRKTYLGTRVNAHSYNGYDGREVLNVEDLQTNPKSIDWRTKNAVTPIKDQGQCGSCWSFSTTGSTEGAHALKTKKLVSLSEQNLVDCSGPEENFGCDGGLMNNAFDYIIKNKGIDTESSYPYTAETGSTCLFNKSDIGATIKGYVNITAGSEISLENGAQHGPVSVAIDASHNSFQLYTSGIYYEPKCSPTELDHGVLVVGYGVQGKDDEGPVLNRKQTIVIHKNEDNKVESSDDSSDSVRPKANNYWIVKNSWGTSWGIKGYILMSKDRKNNCGIASVSSYPLA</sequence>
<name>CYSP2_DICDI</name>
<reference key="1">
    <citation type="journal article" date="1987" name="Mol. Cell. Biol.">
        <title>Identification of the sequences controlling cyclic AMP regulation and cell-type-specific expression of a prestalk-specific gene in Dictyostelium discoideum.</title>
        <authorList>
            <person name="Datta S."/>
            <person name="Firtel R.A."/>
        </authorList>
    </citation>
    <scope>NUCLEOTIDE SEQUENCE [GENOMIC DNA]</scope>
</reference>
<reference key="2">
    <citation type="journal article" date="1985" name="Nucleic Acids Res.">
        <title>Characterization of two highly diverged but developmentally co-regulated cysteine proteinase genes in Dictyostelium discoideum.</title>
        <authorList>
            <person name="Pears C.J."/>
            <person name="Mahbubani H.M."/>
            <person name="Williams J.G."/>
        </authorList>
    </citation>
    <scope>NUCLEOTIDE SEQUENCE [MRNA]</scope>
</reference>
<reference key="3">
    <citation type="journal article" date="1986" name="J. Cell Biol.">
        <title>Cellular and subcellular distribution of a cAMP-regulated prestalk protein and prespore protein in Dictyostelium discoideum: a study on the ontogeny of prestalk and prespore cells.</title>
        <authorList>
            <person name="Gomer R.H."/>
            <person name="Datta S."/>
            <person name="Firtel R.A."/>
        </authorList>
    </citation>
    <scope>NUCLEOTIDE SEQUENCE</scope>
</reference>
<reference key="4">
    <citation type="journal article" date="2005" name="Nature">
        <title>The genome of the social amoeba Dictyostelium discoideum.</title>
        <authorList>
            <person name="Eichinger L."/>
            <person name="Pachebat J.A."/>
            <person name="Gloeckner G."/>
            <person name="Rajandream M.A."/>
            <person name="Sucgang R."/>
            <person name="Berriman M."/>
            <person name="Song J."/>
            <person name="Olsen R."/>
            <person name="Szafranski K."/>
            <person name="Xu Q."/>
            <person name="Tunggal B."/>
            <person name="Kummerfeld S."/>
            <person name="Madera M."/>
            <person name="Konfortov B.A."/>
            <person name="Rivero F."/>
            <person name="Bankier A.T."/>
            <person name="Lehmann R."/>
            <person name="Hamlin N."/>
            <person name="Davies R."/>
            <person name="Gaudet P."/>
            <person name="Fey P."/>
            <person name="Pilcher K."/>
            <person name="Chen G."/>
            <person name="Saunders D."/>
            <person name="Sodergren E.J."/>
            <person name="Davis P."/>
            <person name="Kerhornou A."/>
            <person name="Nie X."/>
            <person name="Hall N."/>
            <person name="Anjard C."/>
            <person name="Hemphill L."/>
            <person name="Bason N."/>
            <person name="Farbrother P."/>
            <person name="Desany B."/>
            <person name="Just E."/>
            <person name="Morio T."/>
            <person name="Rost R."/>
            <person name="Churcher C.M."/>
            <person name="Cooper J."/>
            <person name="Haydock S."/>
            <person name="van Driessche N."/>
            <person name="Cronin A."/>
            <person name="Goodhead I."/>
            <person name="Muzny D.M."/>
            <person name="Mourier T."/>
            <person name="Pain A."/>
            <person name="Lu M."/>
            <person name="Harper D."/>
            <person name="Lindsay R."/>
            <person name="Hauser H."/>
            <person name="James K.D."/>
            <person name="Quiles M."/>
            <person name="Madan Babu M."/>
            <person name="Saito T."/>
            <person name="Buchrieser C."/>
            <person name="Wardroper A."/>
            <person name="Felder M."/>
            <person name="Thangavelu M."/>
            <person name="Johnson D."/>
            <person name="Knights A."/>
            <person name="Loulseged H."/>
            <person name="Mungall K.L."/>
            <person name="Oliver K."/>
            <person name="Price C."/>
            <person name="Quail M.A."/>
            <person name="Urushihara H."/>
            <person name="Hernandez J."/>
            <person name="Rabbinowitsch E."/>
            <person name="Steffen D."/>
            <person name="Sanders M."/>
            <person name="Ma J."/>
            <person name="Kohara Y."/>
            <person name="Sharp S."/>
            <person name="Simmonds M.N."/>
            <person name="Spiegler S."/>
            <person name="Tivey A."/>
            <person name="Sugano S."/>
            <person name="White B."/>
            <person name="Walker D."/>
            <person name="Woodward J.R."/>
            <person name="Winckler T."/>
            <person name="Tanaka Y."/>
            <person name="Shaulsky G."/>
            <person name="Schleicher M."/>
            <person name="Weinstock G.M."/>
            <person name="Rosenthal A."/>
            <person name="Cox E.C."/>
            <person name="Chisholm R.L."/>
            <person name="Gibbs R.A."/>
            <person name="Loomis W.F."/>
            <person name="Platzer M."/>
            <person name="Kay R.R."/>
            <person name="Williams J.G."/>
            <person name="Dear P.H."/>
            <person name="Noegel A.A."/>
            <person name="Barrell B.G."/>
            <person name="Kuspa A."/>
        </authorList>
    </citation>
    <scope>NUCLEOTIDE SEQUENCE [LARGE SCALE GENOMIC DNA]</scope>
    <source>
        <strain>AX4</strain>
    </source>
</reference>
<protein>
    <recommendedName>
        <fullName>Cysteine proteinase 2</fullName>
        <ecNumber>3.4.22.-</ecNumber>
    </recommendedName>
    <alternativeName>
        <fullName>Prestalk cathepsin</fullName>
    </alternativeName>
</protein>
<feature type="signal peptide" evidence="2">
    <location>
        <begin position="1"/>
        <end position="18"/>
    </location>
</feature>
<feature type="propeptide" id="PRO_0000026360" description="Activation peptide" evidence="2">
    <location>
        <begin position="19"/>
        <end position="122"/>
    </location>
</feature>
<feature type="chain" id="PRO_0000026361" description="Cysteine proteinase 2">
    <location>
        <begin position="123"/>
        <end position="376"/>
    </location>
</feature>
<feature type="active site" evidence="1">
    <location>
        <position position="147"/>
    </location>
</feature>
<feature type="active site" evidence="1">
    <location>
        <position position="286"/>
    </location>
</feature>
<feature type="active site" evidence="1">
    <location>
        <position position="343"/>
    </location>
</feature>
<feature type="disulfide bond" evidence="1">
    <location>
        <begin position="144"/>
        <end position="187"/>
    </location>
</feature>
<feature type="disulfide bond" evidence="1">
    <location>
        <begin position="178"/>
        <end position="221"/>
    </location>
</feature>
<feature type="disulfide bond" evidence="1">
    <location>
        <begin position="279"/>
        <end position="365"/>
    </location>
</feature>
<keyword id="KW-1015">Disulfide bond</keyword>
<keyword id="KW-0378">Hydrolase</keyword>
<keyword id="KW-0458">Lysosome</keyword>
<keyword id="KW-0645">Protease</keyword>
<keyword id="KW-1185">Reference proteome</keyword>
<keyword id="KW-0732">Signal</keyword>
<keyword id="KW-0788">Thiol protease</keyword>
<keyword id="KW-0865">Zymogen</keyword>
<accession>P04989</accession>
<accession>Q54W98</accession>
<organism>
    <name type="scientific">Dictyostelium discoideum</name>
    <name type="common">Social amoeba</name>
    <dbReference type="NCBI Taxonomy" id="44689"/>
    <lineage>
        <taxon>Eukaryota</taxon>
        <taxon>Amoebozoa</taxon>
        <taxon>Evosea</taxon>
        <taxon>Eumycetozoa</taxon>
        <taxon>Dictyostelia</taxon>
        <taxon>Dictyosteliales</taxon>
        <taxon>Dictyosteliaceae</taxon>
        <taxon>Dictyostelium</taxon>
    </lineage>
</organism>
<comment type="function">
    <text>Cysteine proteinases 1 and 2 are believed to participate in the breakdown of protein during differentiation of Dictyostelium as a response to starvation.</text>
</comment>
<comment type="subcellular location">
    <subcellularLocation>
        <location>Lysosome</location>
    </subcellularLocation>
</comment>
<comment type="developmental stage">
    <text>Expressed by prestalk cells.</text>
</comment>
<comment type="similarity">
    <text evidence="3 4 5">Belongs to the peptidase C1 family.</text>
</comment>
<gene>
    <name type="primary">cprB</name>
    <name type="synonym">CP2</name>
    <name type="ORF">DDB_G0279799</name>
</gene>
<dbReference type="EC" id="3.4.22.-"/>
<dbReference type="EMBL" id="M16039">
    <property type="protein sequence ID" value="AAA33240.1"/>
    <property type="molecule type" value="Genomic_DNA"/>
</dbReference>
<dbReference type="EMBL" id="X03344">
    <property type="protein sequence ID" value="CAA27050.1"/>
    <property type="molecule type" value="mRNA"/>
</dbReference>
<dbReference type="EMBL" id="AAFI02000033">
    <property type="protein sequence ID" value="EAL67513.1"/>
    <property type="molecule type" value="Genomic_DNA"/>
</dbReference>
<dbReference type="PIR" id="A25439">
    <property type="entry name" value="KHDOP"/>
</dbReference>
<dbReference type="RefSeq" id="XP_641494.1">
    <property type="nucleotide sequence ID" value="XM_636402.1"/>
</dbReference>
<dbReference type="SMR" id="P04989"/>
<dbReference type="FunCoup" id="P04989">
    <property type="interactions" value="75"/>
</dbReference>
<dbReference type="STRING" id="44689.P04989"/>
<dbReference type="MEROPS" id="C01.A63"/>
<dbReference type="MEROPS" id="I29.003"/>
<dbReference type="PaxDb" id="44689-DDB0214998"/>
<dbReference type="EnsemblProtists" id="EAL67513">
    <property type="protein sequence ID" value="EAL67513"/>
    <property type="gene ID" value="DDB_G0279799"/>
</dbReference>
<dbReference type="GeneID" id="8622234"/>
<dbReference type="KEGG" id="ddi:DDB_G0279799"/>
<dbReference type="dictyBase" id="DDB_G0279799">
    <property type="gene designation" value="cprB"/>
</dbReference>
<dbReference type="VEuPathDB" id="AmoebaDB:DDB_G0279799"/>
<dbReference type="eggNOG" id="KOG1543">
    <property type="taxonomic scope" value="Eukaryota"/>
</dbReference>
<dbReference type="HOGENOM" id="CLU_012184_1_2_1"/>
<dbReference type="InParanoid" id="P04989"/>
<dbReference type="OMA" id="QAFHYII"/>
<dbReference type="PhylomeDB" id="P04989"/>
<dbReference type="Reactome" id="R-DDI-1474228">
    <property type="pathway name" value="Degradation of the extracellular matrix"/>
</dbReference>
<dbReference type="Reactome" id="R-DDI-2132295">
    <property type="pathway name" value="MHC class II antigen presentation"/>
</dbReference>
<dbReference type="Reactome" id="R-DDI-6798695">
    <property type="pathway name" value="Neutrophil degranulation"/>
</dbReference>
<dbReference type="PRO" id="PR:P04989"/>
<dbReference type="Proteomes" id="UP000002195">
    <property type="component" value="Chromosome 3"/>
</dbReference>
<dbReference type="GO" id="GO:0005615">
    <property type="term" value="C:extracellular space"/>
    <property type="evidence" value="ECO:0000318"/>
    <property type="project" value="GO_Central"/>
</dbReference>
<dbReference type="GO" id="GO:0005764">
    <property type="term" value="C:lysosome"/>
    <property type="evidence" value="ECO:0000318"/>
    <property type="project" value="GO_Central"/>
</dbReference>
<dbReference type="GO" id="GO:0004197">
    <property type="term" value="F:cysteine-type endopeptidase activity"/>
    <property type="evidence" value="ECO:0000318"/>
    <property type="project" value="GO_Central"/>
</dbReference>
<dbReference type="GO" id="GO:0006955">
    <property type="term" value="P:immune response"/>
    <property type="evidence" value="ECO:0000318"/>
    <property type="project" value="GO_Central"/>
</dbReference>
<dbReference type="GO" id="GO:2001235">
    <property type="term" value="P:positive regulation of apoptotic signaling pathway"/>
    <property type="evidence" value="ECO:0000318"/>
    <property type="project" value="GO_Central"/>
</dbReference>
<dbReference type="GO" id="GO:0051603">
    <property type="term" value="P:proteolysis involved in protein catabolic process"/>
    <property type="evidence" value="ECO:0000318"/>
    <property type="project" value="GO_Central"/>
</dbReference>
<dbReference type="GO" id="GO:0051591">
    <property type="term" value="P:response to cAMP"/>
    <property type="evidence" value="ECO:0000314"/>
    <property type="project" value="dictyBase"/>
</dbReference>
<dbReference type="CDD" id="cd02248">
    <property type="entry name" value="Peptidase_C1A"/>
    <property type="match status" value="1"/>
</dbReference>
<dbReference type="Gene3D" id="3.90.70.10">
    <property type="entry name" value="Cysteine proteinases"/>
    <property type="match status" value="1"/>
</dbReference>
<dbReference type="InterPro" id="IPR038765">
    <property type="entry name" value="Papain-like_cys_pep_sf"/>
</dbReference>
<dbReference type="InterPro" id="IPR025661">
    <property type="entry name" value="Pept_asp_AS"/>
</dbReference>
<dbReference type="InterPro" id="IPR000169">
    <property type="entry name" value="Pept_cys_AS"/>
</dbReference>
<dbReference type="InterPro" id="IPR025660">
    <property type="entry name" value="Pept_his_AS"/>
</dbReference>
<dbReference type="InterPro" id="IPR013128">
    <property type="entry name" value="Peptidase_C1A"/>
</dbReference>
<dbReference type="InterPro" id="IPR000668">
    <property type="entry name" value="Peptidase_C1A_C"/>
</dbReference>
<dbReference type="InterPro" id="IPR039417">
    <property type="entry name" value="Peptidase_C1A_papain-like"/>
</dbReference>
<dbReference type="InterPro" id="IPR013201">
    <property type="entry name" value="Prot_inhib_I29"/>
</dbReference>
<dbReference type="PANTHER" id="PTHR12411">
    <property type="entry name" value="CYSTEINE PROTEASE FAMILY C1-RELATED"/>
    <property type="match status" value="1"/>
</dbReference>
<dbReference type="Pfam" id="PF08246">
    <property type="entry name" value="Inhibitor_I29"/>
    <property type="match status" value="1"/>
</dbReference>
<dbReference type="Pfam" id="PF00112">
    <property type="entry name" value="Peptidase_C1"/>
    <property type="match status" value="1"/>
</dbReference>
<dbReference type="PRINTS" id="PR00705">
    <property type="entry name" value="PAPAIN"/>
</dbReference>
<dbReference type="SMART" id="SM00848">
    <property type="entry name" value="Inhibitor_I29"/>
    <property type="match status" value="1"/>
</dbReference>
<dbReference type="SMART" id="SM00645">
    <property type="entry name" value="Pept_C1"/>
    <property type="match status" value="1"/>
</dbReference>
<dbReference type="SUPFAM" id="SSF54001">
    <property type="entry name" value="Cysteine proteinases"/>
    <property type="match status" value="1"/>
</dbReference>
<dbReference type="PROSITE" id="PS00640">
    <property type="entry name" value="THIOL_PROTEASE_ASN"/>
    <property type="match status" value="1"/>
</dbReference>
<dbReference type="PROSITE" id="PS00139">
    <property type="entry name" value="THIOL_PROTEASE_CYS"/>
    <property type="match status" value="1"/>
</dbReference>
<dbReference type="PROSITE" id="PS00639">
    <property type="entry name" value="THIOL_PROTEASE_HIS"/>
    <property type="match status" value="1"/>
</dbReference>